<organism>
    <name type="scientific">Oryctolagus cuniculus</name>
    <name type="common">Rabbit</name>
    <dbReference type="NCBI Taxonomy" id="9986"/>
    <lineage>
        <taxon>Eukaryota</taxon>
        <taxon>Metazoa</taxon>
        <taxon>Chordata</taxon>
        <taxon>Craniata</taxon>
        <taxon>Vertebrata</taxon>
        <taxon>Euteleostomi</taxon>
        <taxon>Mammalia</taxon>
        <taxon>Eutheria</taxon>
        <taxon>Euarchontoglires</taxon>
        <taxon>Glires</taxon>
        <taxon>Lagomorpha</taxon>
        <taxon>Leporidae</taxon>
        <taxon>Oryctolagus</taxon>
    </lineage>
</organism>
<comment type="function">
    <text evidence="3">Muscle-specific E3 ubiquitin-protein ligase that plays a central role in cell membrane repair by nucleating the assembly of the repair machinery at injury sites (By similarity). Its ubiquitination activity is mediated by E2 ubiquitin-conjugating enzymes UBE2D1, UBE2D2 and UBE2D3 (By similarity). Acts as a sensor of oxidation: upon membrane damage, entry of extracellular oxidative environment results in disulfide bond formation and homooligomerization at the injury site (By similarity). This oligomerization acts as a nucleation site for recruitment of TRIM72-containing vesicles to the injury site, leading to membrane patch formation (By similarity). Probably acts upstream of the Ca(2+)-dependent membrane resealing process (By similarity). Required for transport of DYSF to sites of cell injury during repair patch formation (By similarity). Regulates membrane budding and exocytosis (By similarity). May be involved in the regulation of the mobility of KCNB1-containing endocytic vesicles (By similarity).</text>
</comment>
<comment type="catalytic activity">
    <reaction evidence="3">
        <text>S-ubiquitinyl-[E2 ubiquitin-conjugating enzyme]-L-cysteine + [acceptor protein]-L-lysine = [E2 ubiquitin-conjugating enzyme]-L-cysteine + N(6)-ubiquitinyl-[acceptor protein]-L-lysine.</text>
        <dbReference type="EC" id="2.3.2.27"/>
    </reaction>
</comment>
<comment type="activity regulation">
    <text evidence="3">Specifically binds phosphatidylserine (By similarity). The binding to phospholipids enhances ubiquitination activity (By similarity).</text>
</comment>
<comment type="pathway">
    <text evidence="3">Protein modification; protein ubiquitination.</text>
</comment>
<comment type="subunit">
    <text evidence="3">Homodimer (By similarity). Homooligomer; disulfide-linked (By similarity). Oligomerizes on the phospholipid membrane (By similarity). Interacts with DYSF and CAV3 (By similarity).</text>
</comment>
<comment type="subcellular location">
    <subcellularLocation>
        <location evidence="1">Cell membrane</location>
        <location evidence="1">Sarcolemma</location>
    </subcellularLocation>
    <subcellularLocation>
        <location evidence="4">Cytoplasmic vesicle membrane</location>
    </subcellularLocation>
    <text evidence="1">Tethered to plasma membrane and cytoplasmic vesicles via its interaction with phosphatidylserine.</text>
</comment>
<comment type="tissue specificity">
    <text evidence="9">Muscle-specific.</text>
</comment>
<comment type="domain">
    <text evidence="3">The RING domain is flexible in both the dimer and oligomer (By similarity). Binding to the negatively charged phosphatidylserine lipids is mediated by the positively charged PRYSPRY domains and is inhibited by Ca(2+) (By similarity).</text>
</comment>
<comment type="PTM">
    <text evidence="1">Disulfide bond formation at Cys-242 occurs in case of membrane damage that cause the entry of the oxidized milieu of the extracellular space, resulting in homooligomerization.</text>
</comment>
<comment type="similarity">
    <text evidence="5">Belongs to the TRIM/RBCC family.</text>
</comment>
<sequence>MSAAPGLLHQELSCPLCLQLFDAPVTAECGHSFCRACLSRVAGEPAADGTVNCPCCQAPTRPQALSTNLQLARLVEGLAQVPQGHCEEHLDPLSIYCEQDRVLVCGVCASLGSHRGHRLLPAAEAHSRLKTQLPQQKLQLQEASMRKEKSVAVLEHQLTEVEETVRQFRGAVGEQLGKMRVFLAALEGSLDREAERVRSEAGVALRRELGGLHSYLEQLRQMEKVLEEVADKPQTEFLMKYCLVTSRLQKILAESPPPARLDIQLPIISDDFKFQVWRKMFRALMPALEELTFDPSSAHPSLVVSPTGRRVECSEQKAPPAGDDARQFDKAVAVVAQQLLSDGEHYWEVEVGDKPRWALGVMASEASRRGRLHAVPSQGLWLLGLRDGKTLEAHVEAKEPRALRTPERRPTRLGLYLSFGDGVLAFYDASDADALELLFAFRERLPGPVYPFFDVCWHDKGKNAQPLLLVGPDGQEA</sequence>
<protein>
    <recommendedName>
        <fullName>Tripartite motif-containing protein 72</fullName>
        <ecNumber evidence="3">2.3.2.27</ecNumber>
    </recommendedName>
    <alternativeName>
        <fullName evidence="4">Mitsugumin-53</fullName>
        <shortName>Mg53</shortName>
    </alternativeName>
</protein>
<feature type="chain" id="PRO_0000278132" description="Tripartite motif-containing protein 72">
    <location>
        <begin position="1"/>
        <end position="477"/>
    </location>
</feature>
<feature type="domain" description="B30.2/SPRY" evidence="8">
    <location>
        <begin position="271"/>
        <end position="475"/>
    </location>
</feature>
<feature type="zinc finger region" description="RING-type" evidence="7">
    <location>
        <begin position="14"/>
        <end position="57"/>
    </location>
</feature>
<feature type="zinc finger region" description="B box-type" evidence="6">
    <location>
        <begin position="81"/>
        <end position="122"/>
    </location>
</feature>
<feature type="coiled-coil region" evidence="3 5">
    <location>
        <begin position="135"/>
        <end position="232"/>
    </location>
</feature>
<feature type="binding site" evidence="3">
    <location>
        <position position="14"/>
    </location>
    <ligand>
        <name>Zn(2+)</name>
        <dbReference type="ChEBI" id="CHEBI:29105"/>
        <label>1</label>
        <note>structural for RING</note>
    </ligand>
</feature>
<feature type="binding site" evidence="3">
    <location>
        <position position="17"/>
    </location>
    <ligand>
        <name>Zn(2+)</name>
        <dbReference type="ChEBI" id="CHEBI:29105"/>
        <label>1</label>
        <note>structural for RING</note>
    </ligand>
</feature>
<feature type="binding site" evidence="3">
    <location>
        <position position="29"/>
    </location>
    <ligand>
        <name>Zn(2+)</name>
        <dbReference type="ChEBI" id="CHEBI:29105"/>
        <label>2</label>
        <note>structural for RING</note>
    </ligand>
</feature>
<feature type="binding site" evidence="3">
    <location>
        <position position="31"/>
    </location>
    <ligand>
        <name>Zn(2+)</name>
        <dbReference type="ChEBI" id="CHEBI:29105"/>
        <label>2</label>
        <note>structural for RING</note>
    </ligand>
</feature>
<feature type="binding site" evidence="3">
    <location>
        <position position="34"/>
    </location>
    <ligand>
        <name>Zn(2+)</name>
        <dbReference type="ChEBI" id="CHEBI:29105"/>
        <label>1</label>
        <note>structural for RING</note>
    </ligand>
</feature>
<feature type="binding site" evidence="3">
    <location>
        <position position="37"/>
    </location>
    <ligand>
        <name>Zn(2+)</name>
        <dbReference type="ChEBI" id="CHEBI:29105"/>
        <label>1</label>
        <note>structural for RING</note>
    </ligand>
</feature>
<feature type="binding site" evidence="3">
    <location>
        <position position="53"/>
    </location>
    <ligand>
        <name>Zn(2+)</name>
        <dbReference type="ChEBI" id="CHEBI:29105"/>
        <label>2</label>
        <note>structural for RING</note>
    </ligand>
</feature>
<feature type="binding site" evidence="3">
    <location>
        <position position="56"/>
    </location>
    <ligand>
        <name>Zn(2+)</name>
        <dbReference type="ChEBI" id="CHEBI:29105"/>
        <label>2</label>
        <note>structural for RING</note>
    </ligand>
</feature>
<feature type="binding site" evidence="3 6">
    <location>
        <position position="86"/>
    </location>
    <ligand>
        <name>Zn(2+)</name>
        <dbReference type="ChEBI" id="CHEBI:29105"/>
        <label>3</label>
        <note>structural for B-box</note>
    </ligand>
</feature>
<feature type="binding site" evidence="3 6">
    <location>
        <position position="89"/>
    </location>
    <ligand>
        <name>Zn(2+)</name>
        <dbReference type="ChEBI" id="CHEBI:29105"/>
        <label>3</label>
        <note>structural for B-box</note>
    </ligand>
</feature>
<feature type="binding site" evidence="3">
    <location>
        <position position="97"/>
    </location>
    <ligand>
        <name>Zn(2+)</name>
        <dbReference type="ChEBI" id="CHEBI:29105"/>
        <label>4</label>
        <note>structural for B-box</note>
    </ligand>
</feature>
<feature type="binding site" evidence="3">
    <location>
        <position position="100"/>
    </location>
    <ligand>
        <name>Zn(2+)</name>
        <dbReference type="ChEBI" id="CHEBI:29105"/>
        <label>4</label>
        <note>structural for B-box</note>
    </ligand>
</feature>
<feature type="binding site" evidence="3">
    <location>
        <position position="105"/>
    </location>
    <ligand>
        <name>Zn(2+)</name>
        <dbReference type="ChEBI" id="CHEBI:29105"/>
        <label>3</label>
        <note>structural for B-box</note>
    </ligand>
</feature>
<feature type="binding site" evidence="3 6">
    <location>
        <position position="108"/>
    </location>
    <ligand>
        <name>Zn(2+)</name>
        <dbReference type="ChEBI" id="CHEBI:29105"/>
        <label>3</label>
        <note>structural for B-box</note>
    </ligand>
</feature>
<feature type="binding site" evidence="3 6">
    <location>
        <position position="114"/>
    </location>
    <ligand>
        <name>Zn(2+)</name>
        <dbReference type="ChEBI" id="CHEBI:29105"/>
        <label>4</label>
        <note>structural for B-box</note>
    </ligand>
</feature>
<feature type="binding site" evidence="3">
    <location>
        <position position="117"/>
    </location>
    <ligand>
        <name>Zn(2+)</name>
        <dbReference type="ChEBI" id="CHEBI:29105"/>
        <label>4</label>
        <note>structural for B-box</note>
    </ligand>
</feature>
<feature type="modified residue" description="Phosphoserine" evidence="2">
    <location>
        <position position="255"/>
    </location>
</feature>
<feature type="disulfide bond" description="Interchain" evidence="3">
    <location>
        <position position="242"/>
    </location>
</feature>
<gene>
    <name evidence="4" type="primary">TRIM72</name>
    <name evidence="10" type="synonym">MG53</name>
</gene>
<keyword id="KW-1003">Cell membrane</keyword>
<keyword id="KW-0175">Coiled coil</keyword>
<keyword id="KW-0968">Cytoplasmic vesicle</keyword>
<keyword id="KW-0903">Direct protein sequencing</keyword>
<keyword id="KW-1015">Disulfide bond</keyword>
<keyword id="KW-0268">Exocytosis</keyword>
<keyword id="KW-0472">Membrane</keyword>
<keyword id="KW-0479">Metal-binding</keyword>
<keyword id="KW-0597">Phosphoprotein</keyword>
<keyword id="KW-1185">Reference proteome</keyword>
<keyword id="KW-0808">Transferase</keyword>
<keyword id="KW-0813">Transport</keyword>
<keyword id="KW-0833">Ubl conjugation pathway</keyword>
<keyword id="KW-0862">Zinc</keyword>
<keyword id="KW-0863">Zinc-finger</keyword>
<reference key="1">
    <citation type="journal article" date="2009" name="Nat. Cell Biol.">
        <title>MG53 nucleates assembly of cell membrane repair machinery.</title>
        <authorList>
            <person name="Cai C."/>
            <person name="Masumiya H."/>
            <person name="Weisleder N."/>
            <person name="Matsuda N."/>
            <person name="Nishi M."/>
            <person name="Hwang M."/>
            <person name="Ko J.-K."/>
            <person name="Lin P."/>
            <person name="Thornton A."/>
            <person name="Zhao X."/>
            <person name="Pan Z."/>
            <person name="Komazaki S."/>
            <person name="Brotto M."/>
            <person name="Takeshima H."/>
            <person name="Ma J."/>
        </authorList>
    </citation>
    <scope>NUCLEOTIDE SEQUENCE [MRNA]</scope>
    <scope>PARTIAL PROTEIN SEQUENCE</scope>
    <scope>TISSUE SPECIFICITY</scope>
    <source>
        <tissue>Skeletal muscle</tissue>
    </source>
</reference>
<dbReference type="EC" id="2.3.2.27" evidence="3"/>
<dbReference type="EMBL" id="AB231473">
    <property type="protein sequence ID" value="BAE93013.1"/>
    <property type="molecule type" value="mRNA"/>
</dbReference>
<dbReference type="RefSeq" id="NP_001075484.1">
    <property type="nucleotide sequence ID" value="NM_001082015.1"/>
</dbReference>
<dbReference type="SMR" id="Q1XH18"/>
<dbReference type="FunCoup" id="Q1XH18">
    <property type="interactions" value="6"/>
</dbReference>
<dbReference type="STRING" id="9986.ENSOCUP00000013255"/>
<dbReference type="GeneID" id="100008639"/>
<dbReference type="KEGG" id="ocu:100008639"/>
<dbReference type="CTD" id="493829"/>
<dbReference type="eggNOG" id="KOG2177">
    <property type="taxonomic scope" value="Eukaryota"/>
</dbReference>
<dbReference type="InParanoid" id="Q1XH18"/>
<dbReference type="OrthoDB" id="6105938at2759"/>
<dbReference type="UniPathway" id="UPA00143"/>
<dbReference type="Proteomes" id="UP000001811">
    <property type="component" value="Unplaced"/>
</dbReference>
<dbReference type="GO" id="GO:0030659">
    <property type="term" value="C:cytoplasmic vesicle membrane"/>
    <property type="evidence" value="ECO:0000250"/>
    <property type="project" value="UniProtKB"/>
</dbReference>
<dbReference type="GO" id="GO:0042383">
    <property type="term" value="C:sarcolemma"/>
    <property type="evidence" value="ECO:0000250"/>
    <property type="project" value="UniProtKB"/>
</dbReference>
<dbReference type="GO" id="GO:0001786">
    <property type="term" value="F:phosphatidylserine binding"/>
    <property type="evidence" value="ECO:0000250"/>
    <property type="project" value="UniProtKB"/>
</dbReference>
<dbReference type="GO" id="GO:0016740">
    <property type="term" value="F:transferase activity"/>
    <property type="evidence" value="ECO:0007669"/>
    <property type="project" value="UniProtKB-KW"/>
</dbReference>
<dbReference type="GO" id="GO:0008270">
    <property type="term" value="F:zinc ion binding"/>
    <property type="evidence" value="ECO:0007669"/>
    <property type="project" value="UniProtKB-KW"/>
</dbReference>
<dbReference type="GO" id="GO:0006887">
    <property type="term" value="P:exocytosis"/>
    <property type="evidence" value="ECO:0007669"/>
    <property type="project" value="UniProtKB-KW"/>
</dbReference>
<dbReference type="GO" id="GO:0007517">
    <property type="term" value="P:muscle organ development"/>
    <property type="evidence" value="ECO:0000250"/>
    <property type="project" value="UniProtKB"/>
</dbReference>
<dbReference type="GO" id="GO:0003012">
    <property type="term" value="P:muscle system process"/>
    <property type="evidence" value="ECO:0000250"/>
    <property type="project" value="UniProtKB"/>
</dbReference>
<dbReference type="GO" id="GO:0001778">
    <property type="term" value="P:plasma membrane repair"/>
    <property type="evidence" value="ECO:0000250"/>
    <property type="project" value="UniProtKB"/>
</dbReference>
<dbReference type="GO" id="GO:0051260">
    <property type="term" value="P:protein homooligomerization"/>
    <property type="evidence" value="ECO:0000250"/>
    <property type="project" value="UniProtKB"/>
</dbReference>
<dbReference type="FunFam" id="2.60.120.920:FF:000027">
    <property type="entry name" value="E3 ubiquitin-protein ligase TRIM50"/>
    <property type="match status" value="1"/>
</dbReference>
<dbReference type="FunFam" id="3.30.160.60:FF:001654">
    <property type="entry name" value="Tripartite motif-containing protein 72"/>
    <property type="match status" value="1"/>
</dbReference>
<dbReference type="FunFam" id="3.30.40.10:FF:000487">
    <property type="entry name" value="tripartite motif-containing protein 72"/>
    <property type="match status" value="1"/>
</dbReference>
<dbReference type="Gene3D" id="2.60.120.920">
    <property type="match status" value="1"/>
</dbReference>
<dbReference type="Gene3D" id="3.30.160.60">
    <property type="entry name" value="Classic Zinc Finger"/>
    <property type="match status" value="1"/>
</dbReference>
<dbReference type="Gene3D" id="3.30.40.10">
    <property type="entry name" value="Zinc/RING finger domain, C3HC4 (zinc finger)"/>
    <property type="match status" value="1"/>
</dbReference>
<dbReference type="InterPro" id="IPR001870">
    <property type="entry name" value="B30.2/SPRY"/>
</dbReference>
<dbReference type="InterPro" id="IPR043136">
    <property type="entry name" value="B30.2/SPRY_sf"/>
</dbReference>
<dbReference type="InterPro" id="IPR003879">
    <property type="entry name" value="Butyrophylin_SPRY"/>
</dbReference>
<dbReference type="InterPro" id="IPR013320">
    <property type="entry name" value="ConA-like_dom_sf"/>
</dbReference>
<dbReference type="InterPro" id="IPR006574">
    <property type="entry name" value="PRY"/>
</dbReference>
<dbReference type="InterPro" id="IPR003877">
    <property type="entry name" value="SPRY_dom"/>
</dbReference>
<dbReference type="InterPro" id="IPR050143">
    <property type="entry name" value="TRIM/RBCC"/>
</dbReference>
<dbReference type="InterPro" id="IPR000315">
    <property type="entry name" value="Znf_B-box"/>
</dbReference>
<dbReference type="InterPro" id="IPR001841">
    <property type="entry name" value="Znf_RING"/>
</dbReference>
<dbReference type="InterPro" id="IPR013083">
    <property type="entry name" value="Znf_RING/FYVE/PHD"/>
</dbReference>
<dbReference type="InterPro" id="IPR017907">
    <property type="entry name" value="Znf_RING_CS"/>
</dbReference>
<dbReference type="PANTHER" id="PTHR24103">
    <property type="entry name" value="E3 UBIQUITIN-PROTEIN LIGASE TRIM"/>
    <property type="match status" value="1"/>
</dbReference>
<dbReference type="Pfam" id="PF13765">
    <property type="entry name" value="PRY"/>
    <property type="match status" value="1"/>
</dbReference>
<dbReference type="Pfam" id="PF00622">
    <property type="entry name" value="SPRY"/>
    <property type="match status" value="1"/>
</dbReference>
<dbReference type="Pfam" id="PF00643">
    <property type="entry name" value="zf-B_box"/>
    <property type="match status" value="1"/>
</dbReference>
<dbReference type="Pfam" id="PF15227">
    <property type="entry name" value="zf-C3HC4_4"/>
    <property type="match status" value="1"/>
</dbReference>
<dbReference type="PRINTS" id="PR01407">
    <property type="entry name" value="BUTYPHLNCDUF"/>
</dbReference>
<dbReference type="SMART" id="SM00336">
    <property type="entry name" value="BBOX"/>
    <property type="match status" value="1"/>
</dbReference>
<dbReference type="SMART" id="SM00589">
    <property type="entry name" value="PRY"/>
    <property type="match status" value="1"/>
</dbReference>
<dbReference type="SMART" id="SM00184">
    <property type="entry name" value="RING"/>
    <property type="match status" value="1"/>
</dbReference>
<dbReference type="SMART" id="SM00449">
    <property type="entry name" value="SPRY"/>
    <property type="match status" value="1"/>
</dbReference>
<dbReference type="SUPFAM" id="SSF57845">
    <property type="entry name" value="B-box zinc-binding domain"/>
    <property type="match status" value="1"/>
</dbReference>
<dbReference type="SUPFAM" id="SSF49899">
    <property type="entry name" value="Concanavalin A-like lectins/glucanases"/>
    <property type="match status" value="1"/>
</dbReference>
<dbReference type="SUPFAM" id="SSF57850">
    <property type="entry name" value="RING/U-box"/>
    <property type="match status" value="1"/>
</dbReference>
<dbReference type="PROSITE" id="PS50188">
    <property type="entry name" value="B302_SPRY"/>
    <property type="match status" value="1"/>
</dbReference>
<dbReference type="PROSITE" id="PS50119">
    <property type="entry name" value="ZF_BBOX"/>
    <property type="match status" value="1"/>
</dbReference>
<dbReference type="PROSITE" id="PS00518">
    <property type="entry name" value="ZF_RING_1"/>
    <property type="match status" value="1"/>
</dbReference>
<dbReference type="PROSITE" id="PS50089">
    <property type="entry name" value="ZF_RING_2"/>
    <property type="match status" value="1"/>
</dbReference>
<proteinExistence type="evidence at protein level"/>
<name>TRI72_RABIT</name>
<evidence type="ECO:0000250" key="1"/>
<evidence type="ECO:0000250" key="2">
    <source>
        <dbReference type="UniProtKB" id="A0JPQ4"/>
    </source>
</evidence>
<evidence type="ECO:0000250" key="3">
    <source>
        <dbReference type="UniProtKB" id="Q1XH17"/>
    </source>
</evidence>
<evidence type="ECO:0000250" key="4">
    <source>
        <dbReference type="UniProtKB" id="Q6ZMU5"/>
    </source>
</evidence>
<evidence type="ECO:0000255" key="5"/>
<evidence type="ECO:0000255" key="6">
    <source>
        <dbReference type="PROSITE-ProRule" id="PRU00024"/>
    </source>
</evidence>
<evidence type="ECO:0000255" key="7">
    <source>
        <dbReference type="PROSITE-ProRule" id="PRU00175"/>
    </source>
</evidence>
<evidence type="ECO:0000255" key="8">
    <source>
        <dbReference type="PROSITE-ProRule" id="PRU00548"/>
    </source>
</evidence>
<evidence type="ECO:0000269" key="9">
    <source>
    </source>
</evidence>
<evidence type="ECO:0000312" key="10">
    <source>
        <dbReference type="EMBL" id="BAE93013.1"/>
    </source>
</evidence>
<accession>Q1XH18</accession>